<reference key="1">
    <citation type="journal article" date="2009" name="PLoS ONE">
        <title>Genome sequence of the endosymbiont Rickettsia peacockii and comparison with virulent Rickettsia rickettsii: identification of virulence factors.</title>
        <authorList>
            <person name="Felsheim R.F."/>
            <person name="Kurtti T.J."/>
            <person name="Munderloh U.G."/>
        </authorList>
    </citation>
    <scope>NUCLEOTIDE SEQUENCE [LARGE SCALE GENOMIC DNA]</scope>
    <source>
        <strain>Rustic</strain>
    </source>
</reference>
<sequence>MKLSDFDFDLPSELIAQYPSSERDNSDLLIAVTPLIKTKFYNIIDYLKEGDLLVFNNSKVIKAKLNLGKNITINLNQKLSDDSWSAFAKPARKLHVNDEFYFDNHKVIITEKLAMGEIKVKFELNDISVFEFLNKYGEMPLPVYIRRSHSLCHPVATTTGSKTYLNNDWIPWSNHGMTNTQNDNDRYQTVYSQIEGSVAAPTAGLHFTKDILDKLKAEGIQATFLTLHVGAGTFLPVKTENIHEHKMHTEYCSITPDTAEIINKAKQEGKRIIAVGTTTLRTLESSCNNGIVKAGSFKTDIFITPGFKFQTADMLLTNFHFPKSTLFMLICAFAGFKEMHELYKYAIKEAMRFFSYGDATLLCRK</sequence>
<proteinExistence type="inferred from homology"/>
<protein>
    <recommendedName>
        <fullName evidence="1">S-adenosylmethionine:tRNA ribosyltransferase-isomerase</fullName>
        <ecNumber evidence="1">2.4.99.17</ecNumber>
    </recommendedName>
    <alternativeName>
        <fullName evidence="1">Queuosine biosynthesis protein QueA</fullName>
    </alternativeName>
</protein>
<dbReference type="EC" id="2.4.99.17" evidence="1"/>
<dbReference type="EMBL" id="CP001227">
    <property type="protein sequence ID" value="ACR47235.1"/>
    <property type="molecule type" value="Genomic_DNA"/>
</dbReference>
<dbReference type="RefSeq" id="WP_012736513.1">
    <property type="nucleotide sequence ID" value="NC_012730.1"/>
</dbReference>
<dbReference type="SMR" id="C4K0Y4"/>
<dbReference type="KEGG" id="rpk:RPR_01855"/>
<dbReference type="HOGENOM" id="CLU_039110_1_0_5"/>
<dbReference type="UniPathway" id="UPA00392"/>
<dbReference type="Proteomes" id="UP000005015">
    <property type="component" value="Chromosome"/>
</dbReference>
<dbReference type="GO" id="GO:0005737">
    <property type="term" value="C:cytoplasm"/>
    <property type="evidence" value="ECO:0007669"/>
    <property type="project" value="UniProtKB-SubCell"/>
</dbReference>
<dbReference type="GO" id="GO:0051075">
    <property type="term" value="F:S-adenosylmethionine:tRNA ribosyltransferase-isomerase activity"/>
    <property type="evidence" value="ECO:0007669"/>
    <property type="project" value="UniProtKB-EC"/>
</dbReference>
<dbReference type="GO" id="GO:0008616">
    <property type="term" value="P:queuosine biosynthetic process"/>
    <property type="evidence" value="ECO:0007669"/>
    <property type="project" value="UniProtKB-UniRule"/>
</dbReference>
<dbReference type="GO" id="GO:0002099">
    <property type="term" value="P:tRNA wobble guanine modification"/>
    <property type="evidence" value="ECO:0007669"/>
    <property type="project" value="TreeGrafter"/>
</dbReference>
<dbReference type="Gene3D" id="2.40.10.240">
    <property type="entry name" value="QueA-like"/>
    <property type="match status" value="1"/>
</dbReference>
<dbReference type="Gene3D" id="3.40.1780.10">
    <property type="entry name" value="QueA-like"/>
    <property type="match status" value="1"/>
</dbReference>
<dbReference type="HAMAP" id="MF_00113">
    <property type="entry name" value="QueA"/>
    <property type="match status" value="1"/>
</dbReference>
<dbReference type="InterPro" id="IPR003699">
    <property type="entry name" value="QueA"/>
</dbReference>
<dbReference type="InterPro" id="IPR042118">
    <property type="entry name" value="QueA_dom1"/>
</dbReference>
<dbReference type="InterPro" id="IPR042119">
    <property type="entry name" value="QueA_dom2"/>
</dbReference>
<dbReference type="InterPro" id="IPR036100">
    <property type="entry name" value="QueA_sf"/>
</dbReference>
<dbReference type="NCBIfam" id="NF002398">
    <property type="entry name" value="PRK01424.1"/>
    <property type="match status" value="1"/>
</dbReference>
<dbReference type="PANTHER" id="PTHR30307">
    <property type="entry name" value="S-ADENOSYLMETHIONINE:TRNA RIBOSYLTRANSFERASE-ISOMERASE"/>
    <property type="match status" value="1"/>
</dbReference>
<dbReference type="PANTHER" id="PTHR30307:SF0">
    <property type="entry name" value="S-ADENOSYLMETHIONINE:TRNA RIBOSYLTRANSFERASE-ISOMERASE"/>
    <property type="match status" value="1"/>
</dbReference>
<dbReference type="Pfam" id="PF02547">
    <property type="entry name" value="Queuosine_synth"/>
    <property type="match status" value="1"/>
</dbReference>
<dbReference type="SUPFAM" id="SSF111337">
    <property type="entry name" value="QueA-like"/>
    <property type="match status" value="1"/>
</dbReference>
<comment type="function">
    <text evidence="1">Transfers and isomerizes the ribose moiety from AdoMet to the 7-aminomethyl group of 7-deazaguanine (preQ1-tRNA) to give epoxyqueuosine (oQ-tRNA).</text>
</comment>
<comment type="catalytic activity">
    <reaction evidence="1">
        <text>7-aminomethyl-7-carbaguanosine(34) in tRNA + S-adenosyl-L-methionine = epoxyqueuosine(34) in tRNA + adenine + L-methionine + 2 H(+)</text>
        <dbReference type="Rhea" id="RHEA:32155"/>
        <dbReference type="Rhea" id="RHEA-COMP:10342"/>
        <dbReference type="Rhea" id="RHEA-COMP:18582"/>
        <dbReference type="ChEBI" id="CHEBI:15378"/>
        <dbReference type="ChEBI" id="CHEBI:16708"/>
        <dbReference type="ChEBI" id="CHEBI:57844"/>
        <dbReference type="ChEBI" id="CHEBI:59789"/>
        <dbReference type="ChEBI" id="CHEBI:82833"/>
        <dbReference type="ChEBI" id="CHEBI:194443"/>
        <dbReference type="EC" id="2.4.99.17"/>
    </reaction>
</comment>
<comment type="pathway">
    <text evidence="1">tRNA modification; tRNA-queuosine biosynthesis.</text>
</comment>
<comment type="subunit">
    <text evidence="1">Monomer.</text>
</comment>
<comment type="subcellular location">
    <subcellularLocation>
        <location evidence="1">Cytoplasm</location>
    </subcellularLocation>
</comment>
<comment type="similarity">
    <text evidence="1">Belongs to the QueA family.</text>
</comment>
<name>QUEA_RICPU</name>
<accession>C4K0Y4</accession>
<organism>
    <name type="scientific">Rickettsia peacockii (strain Rustic)</name>
    <dbReference type="NCBI Taxonomy" id="562019"/>
    <lineage>
        <taxon>Bacteria</taxon>
        <taxon>Pseudomonadati</taxon>
        <taxon>Pseudomonadota</taxon>
        <taxon>Alphaproteobacteria</taxon>
        <taxon>Rickettsiales</taxon>
        <taxon>Rickettsiaceae</taxon>
        <taxon>Rickettsieae</taxon>
        <taxon>Rickettsia</taxon>
        <taxon>spotted fever group</taxon>
    </lineage>
</organism>
<evidence type="ECO:0000255" key="1">
    <source>
        <dbReference type="HAMAP-Rule" id="MF_00113"/>
    </source>
</evidence>
<feature type="chain" id="PRO_1000202960" description="S-adenosylmethionine:tRNA ribosyltransferase-isomerase">
    <location>
        <begin position="1"/>
        <end position="365"/>
    </location>
</feature>
<keyword id="KW-0963">Cytoplasm</keyword>
<keyword id="KW-0671">Queuosine biosynthesis</keyword>
<keyword id="KW-0949">S-adenosyl-L-methionine</keyword>
<keyword id="KW-0808">Transferase</keyword>
<gene>
    <name evidence="1" type="primary">queA</name>
    <name type="ordered locus">RPR_01855</name>
</gene>